<proteinExistence type="inferred from homology"/>
<sequence length="157" mass="17116">MGIIDFLLALMQDMILSAIPAVGFAMVFNVPHRALPWCALLGALGHGSRMLMMSAGFNIEWSTFMASLLVGSIGIQWSRWYLAHPKVFTVAAVIPMFPGISAYTAMISAVKISHLGYSEPMMITLLTNFLKASSIVGALSIGLSVPGLWLYRKRPRV</sequence>
<evidence type="ECO:0000255" key="1">
    <source>
        <dbReference type="HAMAP-Rule" id="MF_01191"/>
    </source>
</evidence>
<keyword id="KW-0997">Cell inner membrane</keyword>
<keyword id="KW-1003">Cell membrane</keyword>
<keyword id="KW-0472">Membrane</keyword>
<keyword id="KW-0812">Transmembrane</keyword>
<keyword id="KW-1133">Transmembrane helix</keyword>
<keyword id="KW-0813">Transport</keyword>
<gene>
    <name evidence="1" type="primary">yjjB</name>
    <name type="ordered locus">SPA4359</name>
</gene>
<organism>
    <name type="scientific">Salmonella paratyphi A (strain ATCC 9150 / SARB42)</name>
    <dbReference type="NCBI Taxonomy" id="295319"/>
    <lineage>
        <taxon>Bacteria</taxon>
        <taxon>Pseudomonadati</taxon>
        <taxon>Pseudomonadota</taxon>
        <taxon>Gammaproteobacteria</taxon>
        <taxon>Enterobacterales</taxon>
        <taxon>Enterobacteriaceae</taxon>
        <taxon>Salmonella</taxon>
    </lineage>
</organism>
<feature type="chain" id="PRO_0000293673" description="Probable succinate transporter subunit YjjB">
    <location>
        <begin position="1"/>
        <end position="157"/>
    </location>
</feature>
<feature type="transmembrane region" description="Helical" evidence="1">
    <location>
        <begin position="8"/>
        <end position="28"/>
    </location>
</feature>
<feature type="transmembrane region" description="Helical" evidence="1">
    <location>
        <begin position="55"/>
        <end position="75"/>
    </location>
</feature>
<feature type="transmembrane region" description="Helical" evidence="1">
    <location>
        <begin position="87"/>
        <end position="107"/>
    </location>
</feature>
<feature type="transmembrane region" description="Helical" evidence="1">
    <location>
        <begin position="129"/>
        <end position="149"/>
    </location>
</feature>
<dbReference type="EMBL" id="CP000026">
    <property type="protein sequence ID" value="AAV80085.1"/>
    <property type="molecule type" value="Genomic_DNA"/>
</dbReference>
<dbReference type="RefSeq" id="WP_000511329.1">
    <property type="nucleotide sequence ID" value="NC_006511.1"/>
</dbReference>
<dbReference type="KEGG" id="spt:SPA4359"/>
<dbReference type="HOGENOM" id="CLU_117642_1_0_6"/>
<dbReference type="Proteomes" id="UP000008185">
    <property type="component" value="Chromosome"/>
</dbReference>
<dbReference type="GO" id="GO:0005886">
    <property type="term" value="C:plasma membrane"/>
    <property type="evidence" value="ECO:0007669"/>
    <property type="project" value="UniProtKB-SubCell"/>
</dbReference>
<dbReference type="GO" id="GO:0015744">
    <property type="term" value="P:succinate transport"/>
    <property type="evidence" value="ECO:0007669"/>
    <property type="project" value="UniProtKB-UniRule"/>
</dbReference>
<dbReference type="HAMAP" id="MF_01191">
    <property type="entry name" value="YjjB"/>
    <property type="match status" value="1"/>
</dbReference>
<dbReference type="InterPro" id="IPR024528">
    <property type="entry name" value="ThrE_2"/>
</dbReference>
<dbReference type="InterPro" id="IPR050539">
    <property type="entry name" value="ThrE_Dicarb/AminoAcid_Exp"/>
</dbReference>
<dbReference type="InterPro" id="IPR020914">
    <property type="entry name" value="YjjB"/>
</dbReference>
<dbReference type="NCBIfam" id="NF007391">
    <property type="entry name" value="PRK09917.1"/>
    <property type="match status" value="1"/>
</dbReference>
<dbReference type="PANTHER" id="PTHR34390:SF1">
    <property type="entry name" value="SUCCINATE TRANSPORTER SUBUNIT YJJB-RELATED"/>
    <property type="match status" value="1"/>
</dbReference>
<dbReference type="PANTHER" id="PTHR34390">
    <property type="entry name" value="UPF0442 PROTEIN YJJB-RELATED"/>
    <property type="match status" value="1"/>
</dbReference>
<dbReference type="Pfam" id="PF12821">
    <property type="entry name" value="ThrE_2"/>
    <property type="match status" value="1"/>
</dbReference>
<comment type="function">
    <text evidence="1">Involved in succinate export with YjjP. Both proteins are required for export.</text>
</comment>
<comment type="subunit">
    <text evidence="1">The transporter is composed of YjjB and YjjP.</text>
</comment>
<comment type="subcellular location">
    <subcellularLocation>
        <location evidence="1">Cell inner membrane</location>
        <topology evidence="1">Multi-pass membrane protein</topology>
    </subcellularLocation>
</comment>
<comment type="similarity">
    <text evidence="1">Belongs to the ThrE exporter (TC 2.A.79) family.</text>
</comment>
<name>YJJB_SALPA</name>
<protein>
    <recommendedName>
        <fullName evidence="1">Probable succinate transporter subunit YjjB</fullName>
    </recommendedName>
</protein>
<reference key="1">
    <citation type="journal article" date="2004" name="Nat. Genet.">
        <title>Comparison of genome degradation in Paratyphi A and Typhi, human-restricted serovars of Salmonella enterica that cause typhoid.</title>
        <authorList>
            <person name="McClelland M."/>
            <person name="Sanderson K.E."/>
            <person name="Clifton S.W."/>
            <person name="Latreille P."/>
            <person name="Porwollik S."/>
            <person name="Sabo A."/>
            <person name="Meyer R."/>
            <person name="Bieri T."/>
            <person name="Ozersky P."/>
            <person name="McLellan M."/>
            <person name="Harkins C.R."/>
            <person name="Wang C."/>
            <person name="Nguyen C."/>
            <person name="Berghoff A."/>
            <person name="Elliott G."/>
            <person name="Kohlberg S."/>
            <person name="Strong C."/>
            <person name="Du F."/>
            <person name="Carter J."/>
            <person name="Kremizki C."/>
            <person name="Layman D."/>
            <person name="Leonard S."/>
            <person name="Sun H."/>
            <person name="Fulton L."/>
            <person name="Nash W."/>
            <person name="Miner T."/>
            <person name="Minx P."/>
            <person name="Delehaunty K."/>
            <person name="Fronick C."/>
            <person name="Magrini V."/>
            <person name="Nhan M."/>
            <person name="Warren W."/>
            <person name="Florea L."/>
            <person name="Spieth J."/>
            <person name="Wilson R.K."/>
        </authorList>
    </citation>
    <scope>NUCLEOTIDE SEQUENCE [LARGE SCALE GENOMIC DNA]</scope>
    <source>
        <strain>ATCC 9150 / SARB42</strain>
    </source>
</reference>
<accession>Q5PM72</accession>